<keyword id="KW-0963">Cytoplasm</keyword>
<keyword id="KW-0206">Cytoskeleton</keyword>
<keyword id="KW-0433">Leucine-rich repeat</keyword>
<keyword id="KW-1185">Reference proteome</keyword>
<keyword id="KW-0677">Repeat</keyword>
<name>PPR42_XENLA</name>
<evidence type="ECO:0000250" key="1"/>
<sequence length="372" mass="42698">MVRLTVDLVMKNSNVLRNRKDESLARHLRRITHLNFSNKNIDEVEDLTMCRNLTVLYLYDNNINQIKNLGSNLTHLYLQNNCISCIENLSGLKRLEKLYLGGNCLTVVEGLEGLRELRELHIENQRLPPGEKLLFDPRTLHFLGISLSVLNISNNNIDELKDLAVLENLTQFVAADNQLKEIKDLEFVLSKWTKLCRMDLSGNPVCLKPKYREKVTIISKTLEILDGKEIKEMARQFLLNWKASRISKKKKNLENMTGPSLLPQLYESDNYRSLLPVYNQNFRHQLLEQPKYIVMAHTQSCNKHGQLQRSAGKRNISVIEDIKSEARGMESFSGCIPESECVGGQHGNERPGYPTNLINLWKGEKDETEGIP</sequence>
<feature type="chain" id="PRO_0000326179" description="Protein phosphatase 1 regulatory subunit 42">
    <location>
        <begin position="1"/>
        <end position="372"/>
    </location>
</feature>
<feature type="repeat" description="LRR 1">
    <location>
        <begin position="30"/>
        <end position="51"/>
    </location>
</feature>
<feature type="repeat" description="LRR 2">
    <location>
        <begin position="52"/>
        <end position="71"/>
    </location>
</feature>
<feature type="repeat" description="LRR 3">
    <location>
        <begin position="72"/>
        <end position="93"/>
    </location>
</feature>
<feature type="repeat" description="LRR 4">
    <location>
        <begin position="94"/>
        <end position="115"/>
    </location>
</feature>
<feature type="repeat" description="LRR 5">
    <location>
        <begin position="116"/>
        <end position="137"/>
    </location>
</feature>
<feature type="repeat" description="LRR 6">
    <location>
        <begin position="146"/>
        <end position="167"/>
    </location>
</feature>
<feature type="repeat" description="LRR 7">
    <location>
        <begin position="168"/>
        <end position="189"/>
    </location>
</feature>
<feature type="domain" description="LRRCT">
    <location>
        <begin position="203"/>
        <end position="241"/>
    </location>
</feature>
<proteinExistence type="evidence at transcript level"/>
<protein>
    <recommendedName>
        <fullName>Protein phosphatase 1 regulatory subunit 42</fullName>
    </recommendedName>
    <alternativeName>
        <fullName>Leucine-rich repeat-containing protein 67</fullName>
    </alternativeName>
</protein>
<comment type="function">
    <text evidence="1">May regulate phosphatase activity of protein phosphatase 1 (PP1) complexes.</text>
</comment>
<comment type="subcellular location">
    <subcellularLocation>
        <location evidence="1">Cytoplasm</location>
        <location evidence="1">Cytoskeleton</location>
    </subcellularLocation>
    <subcellularLocation>
        <location evidence="1">Cytoplasm</location>
        <location evidence="1">Cytoskeleton</location>
        <location evidence="1">Microtubule organizing center</location>
        <location evidence="1">Centrosome</location>
    </subcellularLocation>
</comment>
<reference key="1">
    <citation type="submission" date="2004-12" db="EMBL/GenBank/DDBJ databases">
        <authorList>
            <consortium name="NIH - Xenopus Gene Collection (XGC) project"/>
        </authorList>
    </citation>
    <scope>NUCLEOTIDE SEQUENCE [LARGE SCALE MRNA]</scope>
    <source>
        <tissue>Testis</tissue>
    </source>
</reference>
<gene>
    <name type="primary">ppp1r42</name>
    <name type="synonym">lrrc67</name>
</gene>
<accession>Q5PPX0</accession>
<organism>
    <name type="scientific">Xenopus laevis</name>
    <name type="common">African clawed frog</name>
    <dbReference type="NCBI Taxonomy" id="8355"/>
    <lineage>
        <taxon>Eukaryota</taxon>
        <taxon>Metazoa</taxon>
        <taxon>Chordata</taxon>
        <taxon>Craniata</taxon>
        <taxon>Vertebrata</taxon>
        <taxon>Euteleostomi</taxon>
        <taxon>Amphibia</taxon>
        <taxon>Batrachia</taxon>
        <taxon>Anura</taxon>
        <taxon>Pipoidea</taxon>
        <taxon>Pipidae</taxon>
        <taxon>Xenopodinae</taxon>
        <taxon>Xenopus</taxon>
        <taxon>Xenopus</taxon>
    </lineage>
</organism>
<dbReference type="EMBL" id="BC087459">
    <property type="protein sequence ID" value="AAH87459.1"/>
    <property type="molecule type" value="mRNA"/>
</dbReference>
<dbReference type="RefSeq" id="NP_001088790.1">
    <property type="nucleotide sequence ID" value="NM_001095321.1"/>
</dbReference>
<dbReference type="SMR" id="Q5PPX0"/>
<dbReference type="DNASU" id="496055"/>
<dbReference type="GeneID" id="496055"/>
<dbReference type="KEGG" id="xla:496055"/>
<dbReference type="AGR" id="Xenbase:XB-GENE-6252819"/>
<dbReference type="CTD" id="496055"/>
<dbReference type="Xenbase" id="XB-GENE-6252819">
    <property type="gene designation" value="ppp1r42.L"/>
</dbReference>
<dbReference type="OMA" id="RRFLMNW"/>
<dbReference type="OrthoDB" id="10262005at2759"/>
<dbReference type="Proteomes" id="UP000186698">
    <property type="component" value="Chromosome 6L"/>
</dbReference>
<dbReference type="Bgee" id="496055">
    <property type="expression patterns" value="Expressed in testis and 10 other cell types or tissues"/>
</dbReference>
<dbReference type="GO" id="GO:0005813">
    <property type="term" value="C:centrosome"/>
    <property type="evidence" value="ECO:0000250"/>
    <property type="project" value="UniProtKB"/>
</dbReference>
<dbReference type="GO" id="GO:0005737">
    <property type="term" value="C:cytoplasm"/>
    <property type="evidence" value="ECO:0007669"/>
    <property type="project" value="UniProtKB-KW"/>
</dbReference>
<dbReference type="GO" id="GO:0002177">
    <property type="term" value="C:manchette"/>
    <property type="evidence" value="ECO:0000250"/>
    <property type="project" value="UniProtKB"/>
</dbReference>
<dbReference type="GO" id="GO:0015630">
    <property type="term" value="C:microtubule cytoskeleton"/>
    <property type="evidence" value="ECO:0000250"/>
    <property type="project" value="UniProtKB"/>
</dbReference>
<dbReference type="GO" id="GO:0005815">
    <property type="term" value="C:microtubule organizing center"/>
    <property type="evidence" value="ECO:0000250"/>
    <property type="project" value="UniProtKB"/>
</dbReference>
<dbReference type="GO" id="GO:0003779">
    <property type="term" value="F:actin binding"/>
    <property type="evidence" value="ECO:0000250"/>
    <property type="project" value="UniProtKB"/>
</dbReference>
<dbReference type="GO" id="GO:0070840">
    <property type="term" value="F:dynein complex binding"/>
    <property type="evidence" value="ECO:0000250"/>
    <property type="project" value="UniProtKB"/>
</dbReference>
<dbReference type="GO" id="GO:0015631">
    <property type="term" value="F:tubulin binding"/>
    <property type="evidence" value="ECO:0000250"/>
    <property type="project" value="UniProtKB"/>
</dbReference>
<dbReference type="CDD" id="cd21340">
    <property type="entry name" value="PPP1R42"/>
    <property type="match status" value="1"/>
</dbReference>
<dbReference type="FunFam" id="3.80.10.10:FF:000293">
    <property type="entry name" value="Protein phosphatase 1 regulatory subunit 42"/>
    <property type="match status" value="1"/>
</dbReference>
<dbReference type="FunFam" id="3.80.10.10:FF:000201">
    <property type="entry name" value="protein phosphatase 1 regulatory subunit 42"/>
    <property type="match status" value="1"/>
</dbReference>
<dbReference type="Gene3D" id="3.80.10.10">
    <property type="entry name" value="Ribonuclease Inhibitor"/>
    <property type="match status" value="2"/>
</dbReference>
<dbReference type="InterPro" id="IPR001611">
    <property type="entry name" value="Leu-rich_rpt"/>
</dbReference>
<dbReference type="InterPro" id="IPR025875">
    <property type="entry name" value="Leu-rich_rpt_4"/>
</dbReference>
<dbReference type="InterPro" id="IPR032675">
    <property type="entry name" value="LRR_dom_sf"/>
</dbReference>
<dbReference type="InterPro" id="IPR050836">
    <property type="entry name" value="SDS22/Internalin_LRR"/>
</dbReference>
<dbReference type="PANTHER" id="PTHR46652">
    <property type="entry name" value="LEUCINE-RICH REPEAT AND IQ DOMAIN-CONTAINING PROTEIN 1-RELATED"/>
    <property type="match status" value="1"/>
</dbReference>
<dbReference type="PANTHER" id="PTHR46652:SF3">
    <property type="entry name" value="LEUCINE-RICH REPEAT-CONTAINING PROTEIN 9"/>
    <property type="match status" value="1"/>
</dbReference>
<dbReference type="Pfam" id="PF12799">
    <property type="entry name" value="LRR_4"/>
    <property type="match status" value="1"/>
</dbReference>
<dbReference type="SMART" id="SM00365">
    <property type="entry name" value="LRR_SD22"/>
    <property type="match status" value="4"/>
</dbReference>
<dbReference type="SUPFAM" id="SSF52058">
    <property type="entry name" value="L domain-like"/>
    <property type="match status" value="1"/>
</dbReference>
<dbReference type="PROSITE" id="PS51450">
    <property type="entry name" value="LRR"/>
    <property type="match status" value="6"/>
</dbReference>